<proteinExistence type="inferred from homology"/>
<comment type="similarity">
    <text evidence="1">Belongs to the arrestin family.</text>
</comment>
<feature type="chain" id="PRO_0000303892" description="Uncharacterized protein C557.05">
    <location>
        <begin position="1"/>
        <end position="433"/>
    </location>
</feature>
<name>YOA5_SCHPO</name>
<keyword id="KW-1185">Reference proteome</keyword>
<accession>Q9USS1</accession>
<dbReference type="EMBL" id="CU329671">
    <property type="protein sequence ID" value="CAB60672.1"/>
    <property type="molecule type" value="Genomic_DNA"/>
</dbReference>
<dbReference type="PIR" id="T50370">
    <property type="entry name" value="T50370"/>
</dbReference>
<dbReference type="RefSeq" id="NP_596028.1">
    <property type="nucleotide sequence ID" value="NM_001021937.2"/>
</dbReference>
<dbReference type="BioGRID" id="277360">
    <property type="interactions" value="2"/>
</dbReference>
<dbReference type="FunCoup" id="Q9USS1">
    <property type="interactions" value="14"/>
</dbReference>
<dbReference type="STRING" id="284812.Q9USS1"/>
<dbReference type="PaxDb" id="4896-SPBC557.05.1"/>
<dbReference type="EnsemblFungi" id="SPBC557.05.1">
    <property type="protein sequence ID" value="SPBC557.05.1:pep"/>
    <property type="gene ID" value="SPBC557.05"/>
</dbReference>
<dbReference type="KEGG" id="spo:2540843"/>
<dbReference type="PomBase" id="SPBC557.05"/>
<dbReference type="VEuPathDB" id="FungiDB:SPBC557.05"/>
<dbReference type="eggNOG" id="ENOG502RWPB">
    <property type="taxonomic scope" value="Eukaryota"/>
</dbReference>
<dbReference type="HOGENOM" id="CLU_639611_0_0_1"/>
<dbReference type="InParanoid" id="Q9USS1"/>
<dbReference type="OMA" id="RECQEIN"/>
<dbReference type="Reactome" id="R-SPO-844456">
    <property type="pathway name" value="The NLRP3 inflammasome"/>
</dbReference>
<dbReference type="PRO" id="PR:Q9USS1"/>
<dbReference type="Proteomes" id="UP000002485">
    <property type="component" value="Chromosome II"/>
</dbReference>
<dbReference type="GO" id="GO:0005737">
    <property type="term" value="C:cytoplasm"/>
    <property type="evidence" value="ECO:0000318"/>
    <property type="project" value="GO_Central"/>
</dbReference>
<dbReference type="GO" id="GO:0005829">
    <property type="term" value="C:cytosol"/>
    <property type="evidence" value="ECO:0000318"/>
    <property type="project" value="GO_Central"/>
</dbReference>
<dbReference type="GO" id="GO:0005886">
    <property type="term" value="C:plasma membrane"/>
    <property type="evidence" value="ECO:0000318"/>
    <property type="project" value="GO_Central"/>
</dbReference>
<dbReference type="GO" id="GO:0005509">
    <property type="term" value="F:calcium ion binding"/>
    <property type="evidence" value="ECO:0000255"/>
    <property type="project" value="PomBase"/>
</dbReference>
<dbReference type="GO" id="GO:0030674">
    <property type="term" value="F:protein-macromolecule adaptor activity"/>
    <property type="evidence" value="ECO:0000318"/>
    <property type="project" value="GO_Central"/>
</dbReference>
<dbReference type="GO" id="GO:0031625">
    <property type="term" value="F:ubiquitin protein ligase binding"/>
    <property type="evidence" value="ECO:0000318"/>
    <property type="project" value="GO_Central"/>
</dbReference>
<dbReference type="GO" id="GO:0070086">
    <property type="term" value="P:ubiquitin-dependent endocytosis"/>
    <property type="evidence" value="ECO:0000318"/>
    <property type="project" value="GO_Central"/>
</dbReference>
<dbReference type="Gene3D" id="2.60.40.640">
    <property type="match status" value="1"/>
</dbReference>
<dbReference type="InterPro" id="IPR014752">
    <property type="entry name" value="Arrestin-like_C"/>
</dbReference>
<dbReference type="InterPro" id="IPR011022">
    <property type="entry name" value="Arrestin_C-like"/>
</dbReference>
<dbReference type="InterPro" id="IPR050357">
    <property type="entry name" value="Arrestin_domain-protein"/>
</dbReference>
<dbReference type="InterPro" id="IPR014756">
    <property type="entry name" value="Ig_E-set"/>
</dbReference>
<dbReference type="PANTHER" id="PTHR11188">
    <property type="entry name" value="ARRESTIN DOMAIN CONTAINING PROTEIN"/>
    <property type="match status" value="1"/>
</dbReference>
<dbReference type="PANTHER" id="PTHR11188:SF170">
    <property type="entry name" value="ARRESTIN DOMAIN-CONTAINING PROTEIN C31A2.12"/>
    <property type="match status" value="1"/>
</dbReference>
<dbReference type="Pfam" id="PF02752">
    <property type="entry name" value="Arrestin_C"/>
    <property type="match status" value="1"/>
</dbReference>
<dbReference type="SMART" id="SM01017">
    <property type="entry name" value="Arrestin_C"/>
    <property type="match status" value="1"/>
</dbReference>
<dbReference type="SUPFAM" id="SSF81296">
    <property type="entry name" value="E set domains"/>
    <property type="match status" value="1"/>
</dbReference>
<reference key="1">
    <citation type="journal article" date="2002" name="Nature">
        <title>The genome sequence of Schizosaccharomyces pombe.</title>
        <authorList>
            <person name="Wood V."/>
            <person name="Gwilliam R."/>
            <person name="Rajandream M.A."/>
            <person name="Lyne M.H."/>
            <person name="Lyne R."/>
            <person name="Stewart A."/>
            <person name="Sgouros J.G."/>
            <person name="Peat N."/>
            <person name="Hayles J."/>
            <person name="Baker S.G."/>
            <person name="Basham D."/>
            <person name="Bowman S."/>
            <person name="Brooks K."/>
            <person name="Brown D."/>
            <person name="Brown S."/>
            <person name="Chillingworth T."/>
            <person name="Churcher C.M."/>
            <person name="Collins M."/>
            <person name="Connor R."/>
            <person name="Cronin A."/>
            <person name="Davis P."/>
            <person name="Feltwell T."/>
            <person name="Fraser A."/>
            <person name="Gentles S."/>
            <person name="Goble A."/>
            <person name="Hamlin N."/>
            <person name="Harris D.E."/>
            <person name="Hidalgo J."/>
            <person name="Hodgson G."/>
            <person name="Holroyd S."/>
            <person name="Hornsby T."/>
            <person name="Howarth S."/>
            <person name="Huckle E.J."/>
            <person name="Hunt S."/>
            <person name="Jagels K."/>
            <person name="James K.D."/>
            <person name="Jones L."/>
            <person name="Jones M."/>
            <person name="Leather S."/>
            <person name="McDonald S."/>
            <person name="McLean J."/>
            <person name="Mooney P."/>
            <person name="Moule S."/>
            <person name="Mungall K.L."/>
            <person name="Murphy L.D."/>
            <person name="Niblett D."/>
            <person name="Odell C."/>
            <person name="Oliver K."/>
            <person name="O'Neil S."/>
            <person name="Pearson D."/>
            <person name="Quail M.A."/>
            <person name="Rabbinowitsch E."/>
            <person name="Rutherford K.M."/>
            <person name="Rutter S."/>
            <person name="Saunders D."/>
            <person name="Seeger K."/>
            <person name="Sharp S."/>
            <person name="Skelton J."/>
            <person name="Simmonds M.N."/>
            <person name="Squares R."/>
            <person name="Squares S."/>
            <person name="Stevens K."/>
            <person name="Taylor K."/>
            <person name="Taylor R.G."/>
            <person name="Tivey A."/>
            <person name="Walsh S.V."/>
            <person name="Warren T."/>
            <person name="Whitehead S."/>
            <person name="Woodward J.R."/>
            <person name="Volckaert G."/>
            <person name="Aert R."/>
            <person name="Robben J."/>
            <person name="Grymonprez B."/>
            <person name="Weltjens I."/>
            <person name="Vanstreels E."/>
            <person name="Rieger M."/>
            <person name="Schaefer M."/>
            <person name="Mueller-Auer S."/>
            <person name="Gabel C."/>
            <person name="Fuchs M."/>
            <person name="Duesterhoeft A."/>
            <person name="Fritzc C."/>
            <person name="Holzer E."/>
            <person name="Moestl D."/>
            <person name="Hilbert H."/>
            <person name="Borzym K."/>
            <person name="Langer I."/>
            <person name="Beck A."/>
            <person name="Lehrach H."/>
            <person name="Reinhardt R."/>
            <person name="Pohl T.M."/>
            <person name="Eger P."/>
            <person name="Zimmermann W."/>
            <person name="Wedler H."/>
            <person name="Wambutt R."/>
            <person name="Purnelle B."/>
            <person name="Goffeau A."/>
            <person name="Cadieu E."/>
            <person name="Dreano S."/>
            <person name="Gloux S."/>
            <person name="Lelaure V."/>
            <person name="Mottier S."/>
            <person name="Galibert F."/>
            <person name="Aves S.J."/>
            <person name="Xiang Z."/>
            <person name="Hunt C."/>
            <person name="Moore K."/>
            <person name="Hurst S.M."/>
            <person name="Lucas M."/>
            <person name="Rochet M."/>
            <person name="Gaillardin C."/>
            <person name="Tallada V.A."/>
            <person name="Garzon A."/>
            <person name="Thode G."/>
            <person name="Daga R.R."/>
            <person name="Cruzado L."/>
            <person name="Jimenez J."/>
            <person name="Sanchez M."/>
            <person name="del Rey F."/>
            <person name="Benito J."/>
            <person name="Dominguez A."/>
            <person name="Revuelta J.L."/>
            <person name="Moreno S."/>
            <person name="Armstrong J."/>
            <person name="Forsburg S.L."/>
            <person name="Cerutti L."/>
            <person name="Lowe T."/>
            <person name="McCombie W.R."/>
            <person name="Paulsen I."/>
            <person name="Potashkin J."/>
            <person name="Shpakovski G.V."/>
            <person name="Ussery D."/>
            <person name="Barrell B.G."/>
            <person name="Nurse P."/>
        </authorList>
    </citation>
    <scope>NUCLEOTIDE SEQUENCE [LARGE SCALE GENOMIC DNA]</scope>
    <source>
        <strain>972 / ATCC 24843</strain>
    </source>
</reference>
<gene>
    <name type="ORF">SPBC557.05</name>
</gene>
<protein>
    <recommendedName>
        <fullName>Uncharacterized protein C557.05</fullName>
    </recommendedName>
</protein>
<sequence length="433" mass="49461">MDLWKKGKRFFRFSKEPVITCINTSYAGKEIIFDLIANPQMETKDVNLTLDFDAPIFHRKAGIDGLLTLTNKSKVNEIQLISIEVFIIGICKHKFHSSTVFLCLGTHIMEGQYIVPEELLDYAKKRGKNRIISIPNHSTVDIPFQVNFPKHVEVGPGRQIHSRVKVQYFAYANIIYQSADKLRSRRECQEINVLPSISPSSFLDSPSIMCVSKQPDLKKDRQRKSATRITVSLPRTDWLAGESVVSKIKIENHSKSSIKTLKLCLYRRIIGFDPPSWKTQQMMSHLNLSRKNSEVSKTCKCLQKETIRCNKKSNCYNWNGIAALETYTTECHIQIPDKEATITVGSNFEVDHFLKISVGNKLWTLNRVEIPFKIISANSLSLEQENVFLNLEKLTNKASPHGLPISVRLGNSLSYDALSAARRMRNTRYFLYS</sequence>
<organism>
    <name type="scientific">Schizosaccharomyces pombe (strain 972 / ATCC 24843)</name>
    <name type="common">Fission yeast</name>
    <dbReference type="NCBI Taxonomy" id="284812"/>
    <lineage>
        <taxon>Eukaryota</taxon>
        <taxon>Fungi</taxon>
        <taxon>Dikarya</taxon>
        <taxon>Ascomycota</taxon>
        <taxon>Taphrinomycotina</taxon>
        <taxon>Schizosaccharomycetes</taxon>
        <taxon>Schizosaccharomycetales</taxon>
        <taxon>Schizosaccharomycetaceae</taxon>
        <taxon>Schizosaccharomyces</taxon>
    </lineage>
</organism>
<evidence type="ECO:0000305" key="1"/>